<name>PEPE_ECO57</name>
<sequence>MELLLLSNSTLPGKAWLEHALPLIAEQLQGRRSAVFIPFAGVTQTWDDYTAKTAAVLAPLGVSVTGIHSVVDPVAAIENAEIVIVGGGNTFQLLKQCRERGLLAPITDVVKRGALYIGWSAGANLACPTIRTTNDMPIVDPQGFDALNLFPLQINPHFTNALPEGHKGETREQRIRELLVVAPELTIIGLPEGNWITVSKGHATLGGPNTTYVFKAGEEAVPLEAGHRF</sequence>
<reference key="1">
    <citation type="journal article" date="2001" name="Nature">
        <title>Genome sequence of enterohaemorrhagic Escherichia coli O157:H7.</title>
        <authorList>
            <person name="Perna N.T."/>
            <person name="Plunkett G. III"/>
            <person name="Burland V."/>
            <person name="Mau B."/>
            <person name="Glasner J.D."/>
            <person name="Rose D.J."/>
            <person name="Mayhew G.F."/>
            <person name="Evans P.S."/>
            <person name="Gregor J."/>
            <person name="Kirkpatrick H.A."/>
            <person name="Posfai G."/>
            <person name="Hackett J."/>
            <person name="Klink S."/>
            <person name="Boutin A."/>
            <person name="Shao Y."/>
            <person name="Miller L."/>
            <person name="Grotbeck E.J."/>
            <person name="Davis N.W."/>
            <person name="Lim A."/>
            <person name="Dimalanta E.T."/>
            <person name="Potamousis K."/>
            <person name="Apodaca J."/>
            <person name="Anantharaman T.S."/>
            <person name="Lin J."/>
            <person name="Yen G."/>
            <person name="Schwartz D.C."/>
            <person name="Welch R.A."/>
            <person name="Blattner F.R."/>
        </authorList>
    </citation>
    <scope>NUCLEOTIDE SEQUENCE [LARGE SCALE GENOMIC DNA]</scope>
    <source>
        <strain>O157:H7 / EDL933 / ATCC 700927 / EHEC</strain>
    </source>
</reference>
<reference key="2">
    <citation type="journal article" date="2001" name="DNA Res.">
        <title>Complete genome sequence of enterohemorrhagic Escherichia coli O157:H7 and genomic comparison with a laboratory strain K-12.</title>
        <authorList>
            <person name="Hayashi T."/>
            <person name="Makino K."/>
            <person name="Ohnishi M."/>
            <person name="Kurokawa K."/>
            <person name="Ishii K."/>
            <person name="Yokoyama K."/>
            <person name="Han C.-G."/>
            <person name="Ohtsubo E."/>
            <person name="Nakayama K."/>
            <person name="Murata T."/>
            <person name="Tanaka M."/>
            <person name="Tobe T."/>
            <person name="Iida T."/>
            <person name="Takami H."/>
            <person name="Honda T."/>
            <person name="Sasakawa C."/>
            <person name="Ogasawara N."/>
            <person name="Yasunaga T."/>
            <person name="Kuhara S."/>
            <person name="Shiba T."/>
            <person name="Hattori M."/>
            <person name="Shinagawa H."/>
        </authorList>
    </citation>
    <scope>NUCLEOTIDE SEQUENCE [LARGE SCALE GENOMIC DNA]</scope>
    <source>
        <strain>O157:H7 / Sakai / RIMD 0509952 / EHEC</strain>
    </source>
</reference>
<protein>
    <recommendedName>
        <fullName evidence="1">Peptidase E</fullName>
        <ecNumber evidence="1">3.4.13.21</ecNumber>
    </recommendedName>
    <alternativeName>
        <fullName evidence="1">Alpha-aspartyl dipeptidase</fullName>
    </alternativeName>
    <alternativeName>
        <fullName evidence="1">Asp-specific dipeptidase</fullName>
    </alternativeName>
    <alternativeName>
        <fullName evidence="1">Dipeptidase E</fullName>
    </alternativeName>
</protein>
<proteinExistence type="inferred from homology"/>
<accession>P0A7C7</accession>
<accession>P32666</accession>
<keyword id="KW-0963">Cytoplasm</keyword>
<keyword id="KW-0224">Dipeptidase</keyword>
<keyword id="KW-0378">Hydrolase</keyword>
<keyword id="KW-0645">Protease</keyword>
<keyword id="KW-1185">Reference proteome</keyword>
<keyword id="KW-0720">Serine protease</keyword>
<evidence type="ECO:0000255" key="1">
    <source>
        <dbReference type="HAMAP-Rule" id="MF_00510"/>
    </source>
</evidence>
<gene>
    <name evidence="1" type="primary">pepE</name>
    <name type="ordered locus">Z5612</name>
    <name type="ordered locus">ECs4939</name>
</gene>
<feature type="chain" id="PRO_0000209956" description="Peptidase E">
    <location>
        <begin position="1"/>
        <end position="229"/>
    </location>
</feature>
<feature type="active site" description="Charge relay system" evidence="1">
    <location>
        <position position="120"/>
    </location>
</feature>
<feature type="active site" description="Charge relay system" evidence="1">
    <location>
        <position position="135"/>
    </location>
</feature>
<feature type="active site" description="Charge relay system" evidence="1">
    <location>
        <position position="157"/>
    </location>
</feature>
<organism>
    <name type="scientific">Escherichia coli O157:H7</name>
    <dbReference type="NCBI Taxonomy" id="83334"/>
    <lineage>
        <taxon>Bacteria</taxon>
        <taxon>Pseudomonadati</taxon>
        <taxon>Pseudomonadota</taxon>
        <taxon>Gammaproteobacteria</taxon>
        <taxon>Enterobacterales</taxon>
        <taxon>Enterobacteriaceae</taxon>
        <taxon>Escherichia</taxon>
    </lineage>
</organism>
<comment type="function">
    <text evidence="1">Hydrolyzes dipeptides containing N-terminal aspartate residues. May play a role in allowing the cell to use peptide aspartate to spare carbon otherwise required for the synthesis of the aspartate family of amino acids.</text>
</comment>
<comment type="catalytic activity">
    <reaction evidence="1">
        <text>Dipeptidase E catalyzes the hydrolysis of dipeptides Asp-|-Xaa. It does not act on peptides with N-terminal Glu, Asn or Gln, nor does it cleave isoaspartyl peptides.</text>
        <dbReference type="EC" id="3.4.13.21"/>
    </reaction>
</comment>
<comment type="subcellular location">
    <subcellularLocation>
        <location evidence="1">Cytoplasm</location>
    </subcellularLocation>
</comment>
<comment type="similarity">
    <text evidence="1">Belongs to the peptidase S51 family.</text>
</comment>
<dbReference type="EC" id="3.4.13.21" evidence="1"/>
<dbReference type="EMBL" id="AE005174">
    <property type="protein sequence ID" value="AAG59213.1"/>
    <property type="molecule type" value="Genomic_DNA"/>
</dbReference>
<dbReference type="EMBL" id="BA000007">
    <property type="protein sequence ID" value="BAB38362.1"/>
    <property type="molecule type" value="Genomic_DNA"/>
</dbReference>
<dbReference type="PIR" id="A86094">
    <property type="entry name" value="A86094"/>
</dbReference>
<dbReference type="PIR" id="C91246">
    <property type="entry name" value="C91246"/>
</dbReference>
<dbReference type="RefSeq" id="NP_312966.1">
    <property type="nucleotide sequence ID" value="NC_002695.1"/>
</dbReference>
<dbReference type="RefSeq" id="WP_000421763.1">
    <property type="nucleotide sequence ID" value="NZ_VOAI01000027.1"/>
</dbReference>
<dbReference type="SMR" id="P0A7C7"/>
<dbReference type="STRING" id="155864.Z5612"/>
<dbReference type="MEROPS" id="S51.001"/>
<dbReference type="GeneID" id="914842"/>
<dbReference type="GeneID" id="93777874"/>
<dbReference type="KEGG" id="ece:Z5612"/>
<dbReference type="KEGG" id="ecs:ECs_4939"/>
<dbReference type="PATRIC" id="fig|386585.9.peg.5166"/>
<dbReference type="eggNOG" id="COG3340">
    <property type="taxonomic scope" value="Bacteria"/>
</dbReference>
<dbReference type="HOGENOM" id="CLU_071689_0_0_6"/>
<dbReference type="OMA" id="PWGYAVE"/>
<dbReference type="Proteomes" id="UP000000558">
    <property type="component" value="Chromosome"/>
</dbReference>
<dbReference type="Proteomes" id="UP000002519">
    <property type="component" value="Chromosome"/>
</dbReference>
<dbReference type="GO" id="GO:0005737">
    <property type="term" value="C:cytoplasm"/>
    <property type="evidence" value="ECO:0007669"/>
    <property type="project" value="UniProtKB-SubCell"/>
</dbReference>
<dbReference type="GO" id="GO:0016805">
    <property type="term" value="F:dipeptidase activity"/>
    <property type="evidence" value="ECO:0007669"/>
    <property type="project" value="UniProtKB-UniRule"/>
</dbReference>
<dbReference type="GO" id="GO:0008236">
    <property type="term" value="F:serine-type peptidase activity"/>
    <property type="evidence" value="ECO:0007669"/>
    <property type="project" value="UniProtKB-KW"/>
</dbReference>
<dbReference type="GO" id="GO:0006508">
    <property type="term" value="P:proteolysis"/>
    <property type="evidence" value="ECO:0007669"/>
    <property type="project" value="UniProtKB-UniRule"/>
</dbReference>
<dbReference type="CDD" id="cd03146">
    <property type="entry name" value="GAT1_Peptidase_E"/>
    <property type="match status" value="1"/>
</dbReference>
<dbReference type="FunFam" id="3.40.50.880:FF:000007">
    <property type="entry name" value="Peptidase E"/>
    <property type="match status" value="1"/>
</dbReference>
<dbReference type="Gene3D" id="3.40.50.880">
    <property type="match status" value="1"/>
</dbReference>
<dbReference type="HAMAP" id="MF_00510">
    <property type="entry name" value="Peptidase_E"/>
    <property type="match status" value="1"/>
</dbReference>
<dbReference type="InterPro" id="IPR029062">
    <property type="entry name" value="Class_I_gatase-like"/>
</dbReference>
<dbReference type="InterPro" id="IPR005320">
    <property type="entry name" value="Peptidase_S51"/>
</dbReference>
<dbReference type="InterPro" id="IPR023172">
    <property type="entry name" value="Peptidase_S51_dipeptidase-E"/>
</dbReference>
<dbReference type="NCBIfam" id="NF003642">
    <property type="entry name" value="PRK05282.1"/>
    <property type="match status" value="1"/>
</dbReference>
<dbReference type="PANTHER" id="PTHR20842:SF0">
    <property type="entry name" value="ALPHA-ASPARTYL DIPEPTIDASE"/>
    <property type="match status" value="1"/>
</dbReference>
<dbReference type="PANTHER" id="PTHR20842">
    <property type="entry name" value="PROTEASE S51 ALPHA-ASPARTYL DIPEPTIDASE"/>
    <property type="match status" value="1"/>
</dbReference>
<dbReference type="Pfam" id="PF03575">
    <property type="entry name" value="Peptidase_S51"/>
    <property type="match status" value="1"/>
</dbReference>
<dbReference type="SUPFAM" id="SSF52317">
    <property type="entry name" value="Class I glutamine amidotransferase-like"/>
    <property type="match status" value="1"/>
</dbReference>